<gene>
    <name type="primary">SAMD13</name>
    <name type="ORF">HSD-42</name>
    <name type="ORF">HSD42</name>
</gene>
<protein>
    <recommendedName>
        <fullName>Sterile alpha motif domain-containing protein 13</fullName>
        <shortName>SAM domain-containing protein 13</shortName>
    </recommendedName>
</protein>
<organism>
    <name type="scientific">Homo sapiens</name>
    <name type="common">Human</name>
    <dbReference type="NCBI Taxonomy" id="9606"/>
    <lineage>
        <taxon>Eukaryota</taxon>
        <taxon>Metazoa</taxon>
        <taxon>Chordata</taxon>
        <taxon>Craniata</taxon>
        <taxon>Vertebrata</taxon>
        <taxon>Euteleostomi</taxon>
        <taxon>Mammalia</taxon>
        <taxon>Eutheria</taxon>
        <taxon>Euarchontoglires</taxon>
        <taxon>Primates</taxon>
        <taxon>Haplorrhini</taxon>
        <taxon>Catarrhini</taxon>
        <taxon>Hominidae</taxon>
        <taxon>Homo</taxon>
    </lineage>
</organism>
<feature type="chain" id="PRO_0000279505" description="Sterile alpha motif domain-containing protein 13">
    <location>
        <begin position="1"/>
        <end position="122"/>
    </location>
</feature>
<feature type="domain" description="SAM" evidence="1">
    <location>
        <begin position="51"/>
        <end position="119"/>
    </location>
</feature>
<feature type="splice variant" id="VSP_023464" description="In isoform 3." evidence="3">
    <original>MANSLLEGVFAEVKEPCSLPMLSVDMENKENGSVGVKNSMENGRPPDPADWAVMDVVNYFRTVGFEEQASAFQE</original>
    <variation>MRSCLMPGNEMSMTSPEGTEPKGKQRRWQRQKTFGGGTMHSQDS</variation>
    <location>
        <begin position="1"/>
        <end position="74"/>
    </location>
</feature>
<feature type="splice variant" id="VSP_044972" description="In isoform 4." evidence="4">
    <location>
        <begin position="1"/>
        <end position="20"/>
    </location>
</feature>
<feature type="splice variant" id="VSP_023463" description="In isoform 2." evidence="2">
    <original>MANSLLEGVF</original>
    <variation>MRGV</variation>
    <location>
        <begin position="1"/>
        <end position="10"/>
    </location>
</feature>
<comment type="alternative products">
    <event type="alternative splicing"/>
    <isoform>
        <id>Q5VXD3-1</id>
        <name>1</name>
        <sequence type="displayed"/>
    </isoform>
    <isoform>
        <id>Q5VXD3-2</id>
        <name>2</name>
        <sequence type="described" ref="VSP_023463"/>
    </isoform>
    <isoform>
        <id>Q5VXD3-3</id>
        <name>3</name>
        <sequence type="described" ref="VSP_023464"/>
    </isoform>
    <isoform>
        <id>Q5VXD3-4</id>
        <name>4</name>
        <sequence type="described" ref="VSP_044972"/>
    </isoform>
</comment>
<reference key="1">
    <citation type="submission" date="2004-04" db="EMBL/GenBank/DDBJ databases">
        <title>A new spermatogenesis-related gene.</title>
        <authorList>
            <person name="Yang C.B."/>
            <person name="Miao S.Y."/>
            <person name="Zhang X.D."/>
            <person name="Qiao Y."/>
            <person name="Liang G."/>
            <person name="Wang L.F."/>
        </authorList>
    </citation>
    <scope>NUCLEOTIDE SEQUENCE [LARGE SCALE MRNA] (ISOFORM 3)</scope>
    <source>
        <tissue>Testis</tissue>
    </source>
</reference>
<reference key="2">
    <citation type="journal article" date="2004" name="Nat. Genet.">
        <title>Complete sequencing and characterization of 21,243 full-length human cDNAs.</title>
        <authorList>
            <person name="Ota T."/>
            <person name="Suzuki Y."/>
            <person name="Nishikawa T."/>
            <person name="Otsuki T."/>
            <person name="Sugiyama T."/>
            <person name="Irie R."/>
            <person name="Wakamatsu A."/>
            <person name="Hayashi K."/>
            <person name="Sato H."/>
            <person name="Nagai K."/>
            <person name="Kimura K."/>
            <person name="Makita H."/>
            <person name="Sekine M."/>
            <person name="Obayashi M."/>
            <person name="Nishi T."/>
            <person name="Shibahara T."/>
            <person name="Tanaka T."/>
            <person name="Ishii S."/>
            <person name="Yamamoto J."/>
            <person name="Saito K."/>
            <person name="Kawai Y."/>
            <person name="Isono Y."/>
            <person name="Nakamura Y."/>
            <person name="Nagahari K."/>
            <person name="Murakami K."/>
            <person name="Yasuda T."/>
            <person name="Iwayanagi T."/>
            <person name="Wagatsuma M."/>
            <person name="Shiratori A."/>
            <person name="Sudo H."/>
            <person name="Hosoiri T."/>
            <person name="Kaku Y."/>
            <person name="Kodaira H."/>
            <person name="Kondo H."/>
            <person name="Sugawara M."/>
            <person name="Takahashi M."/>
            <person name="Kanda K."/>
            <person name="Yokoi T."/>
            <person name="Furuya T."/>
            <person name="Kikkawa E."/>
            <person name="Omura Y."/>
            <person name="Abe K."/>
            <person name="Kamihara K."/>
            <person name="Katsuta N."/>
            <person name="Sato K."/>
            <person name="Tanikawa M."/>
            <person name="Yamazaki M."/>
            <person name="Ninomiya K."/>
            <person name="Ishibashi T."/>
            <person name="Yamashita H."/>
            <person name="Murakawa K."/>
            <person name="Fujimori K."/>
            <person name="Tanai H."/>
            <person name="Kimata M."/>
            <person name="Watanabe M."/>
            <person name="Hiraoka S."/>
            <person name="Chiba Y."/>
            <person name="Ishida S."/>
            <person name="Ono Y."/>
            <person name="Takiguchi S."/>
            <person name="Watanabe S."/>
            <person name="Yosida M."/>
            <person name="Hotuta T."/>
            <person name="Kusano J."/>
            <person name="Kanehori K."/>
            <person name="Takahashi-Fujii A."/>
            <person name="Hara H."/>
            <person name="Tanase T.-O."/>
            <person name="Nomura Y."/>
            <person name="Togiya S."/>
            <person name="Komai F."/>
            <person name="Hara R."/>
            <person name="Takeuchi K."/>
            <person name="Arita M."/>
            <person name="Imose N."/>
            <person name="Musashino K."/>
            <person name="Yuuki H."/>
            <person name="Oshima A."/>
            <person name="Sasaki N."/>
            <person name="Aotsuka S."/>
            <person name="Yoshikawa Y."/>
            <person name="Matsunawa H."/>
            <person name="Ichihara T."/>
            <person name="Shiohata N."/>
            <person name="Sano S."/>
            <person name="Moriya S."/>
            <person name="Momiyama H."/>
            <person name="Satoh N."/>
            <person name="Takami S."/>
            <person name="Terashima Y."/>
            <person name="Suzuki O."/>
            <person name="Nakagawa S."/>
            <person name="Senoh A."/>
            <person name="Mizoguchi H."/>
            <person name="Goto Y."/>
            <person name="Shimizu F."/>
            <person name="Wakebe H."/>
            <person name="Hishigaki H."/>
            <person name="Watanabe T."/>
            <person name="Sugiyama A."/>
            <person name="Takemoto M."/>
            <person name="Kawakami B."/>
            <person name="Yamazaki M."/>
            <person name="Watanabe K."/>
            <person name="Kumagai A."/>
            <person name="Itakura S."/>
            <person name="Fukuzumi Y."/>
            <person name="Fujimori Y."/>
            <person name="Komiyama M."/>
            <person name="Tashiro H."/>
            <person name="Tanigami A."/>
            <person name="Fujiwara T."/>
            <person name="Ono T."/>
            <person name="Yamada K."/>
            <person name="Fujii Y."/>
            <person name="Ozaki K."/>
            <person name="Hirao M."/>
            <person name="Ohmori Y."/>
            <person name="Kawabata A."/>
            <person name="Hikiji T."/>
            <person name="Kobatake N."/>
            <person name="Inagaki H."/>
            <person name="Ikema Y."/>
            <person name="Okamoto S."/>
            <person name="Okitani R."/>
            <person name="Kawakami T."/>
            <person name="Noguchi S."/>
            <person name="Itoh T."/>
            <person name="Shigeta K."/>
            <person name="Senba T."/>
            <person name="Matsumura K."/>
            <person name="Nakajima Y."/>
            <person name="Mizuno T."/>
            <person name="Morinaga M."/>
            <person name="Sasaki M."/>
            <person name="Togashi T."/>
            <person name="Oyama M."/>
            <person name="Hata H."/>
            <person name="Watanabe M."/>
            <person name="Komatsu T."/>
            <person name="Mizushima-Sugano J."/>
            <person name="Satoh T."/>
            <person name="Shirai Y."/>
            <person name="Takahashi Y."/>
            <person name="Nakagawa K."/>
            <person name="Okumura K."/>
            <person name="Nagase T."/>
            <person name="Nomura N."/>
            <person name="Kikuchi H."/>
            <person name="Masuho Y."/>
            <person name="Yamashita R."/>
            <person name="Nakai K."/>
            <person name="Yada T."/>
            <person name="Nakamura Y."/>
            <person name="Ohara O."/>
            <person name="Isogai T."/>
            <person name="Sugano S."/>
        </authorList>
    </citation>
    <scope>NUCLEOTIDE SEQUENCE [LARGE SCALE MRNA] (ISOFORM 2)</scope>
    <source>
        <tissue>Salivary gland</tissue>
    </source>
</reference>
<reference key="3">
    <citation type="submission" date="2006-03" db="EMBL/GenBank/DDBJ databases">
        <authorList>
            <person name="Arakawa T."/>
            <person name="Carninci P."/>
            <person name="Fukuda S."/>
            <person name="Hasegawa A."/>
            <person name="Hayashida K."/>
            <person name="Hori F."/>
            <person name="Kai C."/>
            <person name="Kawai J."/>
            <person name="Kojima M."/>
            <person name="Murata M."/>
            <person name="Nakamura M."/>
            <person name="Nishiyori H."/>
            <person name="Nomura K."/>
            <person name="Ohno M."/>
            <person name="Sasaki D."/>
            <person name="Shibazaki E."/>
            <person name="Tagami M."/>
            <person name="Tagami Y."/>
            <person name="Hayashizaki Y."/>
        </authorList>
    </citation>
    <scope>NUCLEOTIDE SEQUENCE [LARGE SCALE MRNA] (ISOFORM 4)</scope>
    <source>
        <tissue>Testis</tissue>
    </source>
</reference>
<reference key="4">
    <citation type="journal article" date="2006" name="Nature">
        <title>The DNA sequence and biological annotation of human chromosome 1.</title>
        <authorList>
            <person name="Gregory S.G."/>
            <person name="Barlow K.F."/>
            <person name="McLay K.E."/>
            <person name="Kaul R."/>
            <person name="Swarbreck D."/>
            <person name="Dunham A."/>
            <person name="Scott C.E."/>
            <person name="Howe K.L."/>
            <person name="Woodfine K."/>
            <person name="Spencer C.C.A."/>
            <person name="Jones M.C."/>
            <person name="Gillson C."/>
            <person name="Searle S."/>
            <person name="Zhou Y."/>
            <person name="Kokocinski F."/>
            <person name="McDonald L."/>
            <person name="Evans R."/>
            <person name="Phillips K."/>
            <person name="Atkinson A."/>
            <person name="Cooper R."/>
            <person name="Jones C."/>
            <person name="Hall R.E."/>
            <person name="Andrews T.D."/>
            <person name="Lloyd C."/>
            <person name="Ainscough R."/>
            <person name="Almeida J.P."/>
            <person name="Ambrose K.D."/>
            <person name="Anderson F."/>
            <person name="Andrew R.W."/>
            <person name="Ashwell R.I.S."/>
            <person name="Aubin K."/>
            <person name="Babbage A.K."/>
            <person name="Bagguley C.L."/>
            <person name="Bailey J."/>
            <person name="Beasley H."/>
            <person name="Bethel G."/>
            <person name="Bird C.P."/>
            <person name="Bray-Allen S."/>
            <person name="Brown J.Y."/>
            <person name="Brown A.J."/>
            <person name="Buckley D."/>
            <person name="Burton J."/>
            <person name="Bye J."/>
            <person name="Carder C."/>
            <person name="Chapman J.C."/>
            <person name="Clark S.Y."/>
            <person name="Clarke G."/>
            <person name="Clee C."/>
            <person name="Cobley V."/>
            <person name="Collier R.E."/>
            <person name="Corby N."/>
            <person name="Coville G.J."/>
            <person name="Davies J."/>
            <person name="Deadman R."/>
            <person name="Dunn M."/>
            <person name="Earthrowl M."/>
            <person name="Ellington A.G."/>
            <person name="Errington H."/>
            <person name="Frankish A."/>
            <person name="Frankland J."/>
            <person name="French L."/>
            <person name="Garner P."/>
            <person name="Garnett J."/>
            <person name="Gay L."/>
            <person name="Ghori M.R.J."/>
            <person name="Gibson R."/>
            <person name="Gilby L.M."/>
            <person name="Gillett W."/>
            <person name="Glithero R.J."/>
            <person name="Grafham D.V."/>
            <person name="Griffiths C."/>
            <person name="Griffiths-Jones S."/>
            <person name="Grocock R."/>
            <person name="Hammond S."/>
            <person name="Harrison E.S.I."/>
            <person name="Hart E."/>
            <person name="Haugen E."/>
            <person name="Heath P.D."/>
            <person name="Holmes S."/>
            <person name="Holt K."/>
            <person name="Howden P.J."/>
            <person name="Hunt A.R."/>
            <person name="Hunt S.E."/>
            <person name="Hunter G."/>
            <person name="Isherwood J."/>
            <person name="James R."/>
            <person name="Johnson C."/>
            <person name="Johnson D."/>
            <person name="Joy A."/>
            <person name="Kay M."/>
            <person name="Kershaw J.K."/>
            <person name="Kibukawa M."/>
            <person name="Kimberley A.M."/>
            <person name="King A."/>
            <person name="Knights A.J."/>
            <person name="Lad H."/>
            <person name="Laird G."/>
            <person name="Lawlor S."/>
            <person name="Leongamornlert D.A."/>
            <person name="Lloyd D.M."/>
            <person name="Loveland J."/>
            <person name="Lovell J."/>
            <person name="Lush M.J."/>
            <person name="Lyne R."/>
            <person name="Martin S."/>
            <person name="Mashreghi-Mohammadi M."/>
            <person name="Matthews L."/>
            <person name="Matthews N.S.W."/>
            <person name="McLaren S."/>
            <person name="Milne S."/>
            <person name="Mistry S."/>
            <person name="Moore M.J.F."/>
            <person name="Nickerson T."/>
            <person name="O'Dell C.N."/>
            <person name="Oliver K."/>
            <person name="Palmeiri A."/>
            <person name="Palmer S.A."/>
            <person name="Parker A."/>
            <person name="Patel D."/>
            <person name="Pearce A.V."/>
            <person name="Peck A.I."/>
            <person name="Pelan S."/>
            <person name="Phelps K."/>
            <person name="Phillimore B.J."/>
            <person name="Plumb R."/>
            <person name="Rajan J."/>
            <person name="Raymond C."/>
            <person name="Rouse G."/>
            <person name="Saenphimmachak C."/>
            <person name="Sehra H.K."/>
            <person name="Sheridan E."/>
            <person name="Shownkeen R."/>
            <person name="Sims S."/>
            <person name="Skuce C.D."/>
            <person name="Smith M."/>
            <person name="Steward C."/>
            <person name="Subramanian S."/>
            <person name="Sycamore N."/>
            <person name="Tracey A."/>
            <person name="Tromans A."/>
            <person name="Van Helmond Z."/>
            <person name="Wall M."/>
            <person name="Wallis J.M."/>
            <person name="White S."/>
            <person name="Whitehead S.L."/>
            <person name="Wilkinson J.E."/>
            <person name="Willey D.L."/>
            <person name="Williams H."/>
            <person name="Wilming L."/>
            <person name="Wray P.W."/>
            <person name="Wu Z."/>
            <person name="Coulson A."/>
            <person name="Vaudin M."/>
            <person name="Sulston J.E."/>
            <person name="Durbin R.M."/>
            <person name="Hubbard T."/>
            <person name="Wooster R."/>
            <person name="Dunham I."/>
            <person name="Carter N.P."/>
            <person name="McVean G."/>
            <person name="Ross M.T."/>
            <person name="Harrow J."/>
            <person name="Olson M.V."/>
            <person name="Beck S."/>
            <person name="Rogers J."/>
            <person name="Bentley D.R."/>
        </authorList>
    </citation>
    <scope>NUCLEOTIDE SEQUENCE [LARGE SCALE GENOMIC DNA]</scope>
</reference>
<reference key="5">
    <citation type="submission" date="2005-09" db="EMBL/GenBank/DDBJ databases">
        <authorList>
            <person name="Mural R.J."/>
            <person name="Istrail S."/>
            <person name="Sutton G.G."/>
            <person name="Florea L."/>
            <person name="Halpern A.L."/>
            <person name="Mobarry C.M."/>
            <person name="Lippert R."/>
            <person name="Walenz B."/>
            <person name="Shatkay H."/>
            <person name="Dew I."/>
            <person name="Miller J.R."/>
            <person name="Flanigan M.J."/>
            <person name="Edwards N.J."/>
            <person name="Bolanos R."/>
            <person name="Fasulo D."/>
            <person name="Halldorsson B.V."/>
            <person name="Hannenhalli S."/>
            <person name="Turner R."/>
            <person name="Yooseph S."/>
            <person name="Lu F."/>
            <person name="Nusskern D.R."/>
            <person name="Shue B.C."/>
            <person name="Zheng X.H."/>
            <person name="Zhong F."/>
            <person name="Delcher A.L."/>
            <person name="Huson D.H."/>
            <person name="Kravitz S.A."/>
            <person name="Mouchard L."/>
            <person name="Reinert K."/>
            <person name="Remington K.A."/>
            <person name="Clark A.G."/>
            <person name="Waterman M.S."/>
            <person name="Eichler E.E."/>
            <person name="Adams M.D."/>
            <person name="Hunkapiller M.W."/>
            <person name="Myers E.W."/>
            <person name="Venter J.C."/>
        </authorList>
    </citation>
    <scope>NUCLEOTIDE SEQUENCE [LARGE SCALE GENOMIC DNA]</scope>
</reference>
<keyword id="KW-0025">Alternative splicing</keyword>
<keyword id="KW-1267">Proteomics identification</keyword>
<keyword id="KW-1185">Reference proteome</keyword>
<sequence>MANSLLEGVFAEVKEPCSLPMLSVDMENKENGSVGVKNSMENGRPPDPADWAVMDVVNYFRTVGFEEQASAFQEQEIDGKSLLLMTRNDVLTGLQLKLGPALKIYEYHVKPLQTKHLKNNSS</sequence>
<accession>Q5VXD3</accession>
<accession>B3KPW8</accession>
<accession>D3DT11</accession>
<accession>Q53AI4</accession>
<accession>Q5VXD2</accession>
<accession>Q5VXD4</accession>
<evidence type="ECO:0000255" key="1">
    <source>
        <dbReference type="PROSITE-ProRule" id="PRU00184"/>
    </source>
</evidence>
<evidence type="ECO:0000303" key="2">
    <source>
    </source>
</evidence>
<evidence type="ECO:0000303" key="3">
    <source ref="1"/>
</evidence>
<evidence type="ECO:0000303" key="4">
    <source ref="3"/>
</evidence>
<proteinExistence type="evidence at protein level"/>
<dbReference type="EMBL" id="AY604570">
    <property type="protein sequence ID" value="AAU14234.1"/>
    <property type="molecule type" value="mRNA"/>
</dbReference>
<dbReference type="EMBL" id="AK056937">
    <property type="protein sequence ID" value="BAG51830.1"/>
    <property type="molecule type" value="mRNA"/>
</dbReference>
<dbReference type="EMBL" id="DB459148">
    <property type="status" value="NOT_ANNOTATED_CDS"/>
    <property type="molecule type" value="mRNA"/>
</dbReference>
<dbReference type="EMBL" id="AL359273">
    <property type="status" value="NOT_ANNOTATED_CDS"/>
    <property type="molecule type" value="Genomic_DNA"/>
</dbReference>
<dbReference type="EMBL" id="CH471097">
    <property type="protein sequence ID" value="EAW73240.1"/>
    <property type="molecule type" value="Genomic_DNA"/>
</dbReference>
<dbReference type="EMBL" id="CH471097">
    <property type="protein sequence ID" value="EAW73241.1"/>
    <property type="molecule type" value="Genomic_DNA"/>
</dbReference>
<dbReference type="EMBL" id="CH471097">
    <property type="protein sequence ID" value="EAW73242.1"/>
    <property type="molecule type" value="Genomic_DNA"/>
</dbReference>
<dbReference type="CCDS" id="CCDS30760.1">
    <molecule id="Q5VXD3-2"/>
</dbReference>
<dbReference type="CCDS" id="CCDS44166.1">
    <molecule id="Q5VXD3-4"/>
</dbReference>
<dbReference type="RefSeq" id="NP_001010971.1">
    <molecule id="Q5VXD3-2"/>
    <property type="nucleotide sequence ID" value="NM_001010971.3"/>
</dbReference>
<dbReference type="RefSeq" id="NP_001128135.1">
    <molecule id="Q5VXD3-4"/>
    <property type="nucleotide sequence ID" value="NM_001134663.2"/>
</dbReference>
<dbReference type="RefSeq" id="NP_001128136.1">
    <molecule id="Q5VXD3-4"/>
    <property type="nucleotide sequence ID" value="NM_001134664.2"/>
</dbReference>
<dbReference type="RefSeq" id="XP_016855866.1">
    <molecule id="Q5VXD3-1"/>
    <property type="nucleotide sequence ID" value="XM_017000377.3"/>
</dbReference>
<dbReference type="RefSeq" id="XP_054190548.1">
    <molecule id="Q5VXD3-1"/>
    <property type="nucleotide sequence ID" value="XM_054334573.1"/>
</dbReference>
<dbReference type="SMR" id="Q5VXD3"/>
<dbReference type="BioGRID" id="127148">
    <property type="interactions" value="5"/>
</dbReference>
<dbReference type="FunCoup" id="Q5VXD3">
    <property type="interactions" value="25"/>
</dbReference>
<dbReference type="IntAct" id="Q5VXD3">
    <property type="interactions" value="1"/>
</dbReference>
<dbReference type="MINT" id="Q5VXD3"/>
<dbReference type="STRING" id="9606.ENSP00000359707"/>
<dbReference type="iPTMnet" id="Q5VXD3"/>
<dbReference type="PhosphoSitePlus" id="Q5VXD3"/>
<dbReference type="BioMuta" id="SAMD13"/>
<dbReference type="DMDM" id="74747524"/>
<dbReference type="jPOST" id="Q5VXD3"/>
<dbReference type="MassIVE" id="Q5VXD3"/>
<dbReference type="PaxDb" id="9606-ENSP00000359707"/>
<dbReference type="PeptideAtlas" id="Q5VXD3"/>
<dbReference type="ProteomicsDB" id="12759"/>
<dbReference type="ProteomicsDB" id="65587">
    <molecule id="Q5VXD3-1"/>
</dbReference>
<dbReference type="ProteomicsDB" id="65588">
    <molecule id="Q5VXD3-2"/>
</dbReference>
<dbReference type="ProteomicsDB" id="65589">
    <molecule id="Q5VXD3-3"/>
</dbReference>
<dbReference type="Antibodypedia" id="71629">
    <property type="antibodies" value="12 antibodies from 9 providers"/>
</dbReference>
<dbReference type="DNASU" id="148418"/>
<dbReference type="Ensembl" id="ENST00000370668.7">
    <molecule id="Q5VXD3-4"/>
    <property type="protein sequence ID" value="ENSP00000359702.3"/>
    <property type="gene ID" value="ENSG00000203943.9"/>
</dbReference>
<dbReference type="Ensembl" id="ENST00000370669.5">
    <molecule id="Q5VXD3-4"/>
    <property type="protein sequence ID" value="ENSP00000359703.1"/>
    <property type="gene ID" value="ENSG00000203943.9"/>
</dbReference>
<dbReference type="Ensembl" id="ENST00000370670.2">
    <molecule id="Q5VXD3-4"/>
    <property type="protein sequence ID" value="ENSP00000359704.2"/>
    <property type="gene ID" value="ENSG00000203943.9"/>
</dbReference>
<dbReference type="Ensembl" id="ENST00000370671.7">
    <molecule id="Q5VXD3-1"/>
    <property type="protein sequence ID" value="ENSP00000359705.3"/>
    <property type="gene ID" value="ENSG00000203943.9"/>
</dbReference>
<dbReference type="Ensembl" id="ENST00000370673.7">
    <molecule id="Q5VXD3-2"/>
    <property type="protein sequence ID" value="ENSP00000359707.3"/>
    <property type="gene ID" value="ENSG00000203943.9"/>
</dbReference>
<dbReference type="Ensembl" id="ENST00000394834.8">
    <molecule id="Q5VXD3-4"/>
    <property type="protein sequence ID" value="ENSP00000378311.3"/>
    <property type="gene ID" value="ENSG00000203943.9"/>
</dbReference>
<dbReference type="GeneID" id="148418"/>
<dbReference type="KEGG" id="hsa:148418"/>
<dbReference type="MANE-Select" id="ENST00000394834.8">
    <molecule id="Q5VXD3-4"/>
    <property type="protein sequence ID" value="ENSP00000378311.3"/>
    <property type="RefSeq nucleotide sequence ID" value="NM_001134663.2"/>
    <property type="RefSeq protein sequence ID" value="NP_001128135.1"/>
</dbReference>
<dbReference type="UCSC" id="uc001djr.3">
    <molecule id="Q5VXD3-1"/>
    <property type="organism name" value="human"/>
</dbReference>
<dbReference type="AGR" id="HGNC:24582"/>
<dbReference type="CTD" id="148418"/>
<dbReference type="GeneCards" id="SAMD13"/>
<dbReference type="HGNC" id="HGNC:24582">
    <property type="gene designation" value="SAMD13"/>
</dbReference>
<dbReference type="HPA" id="ENSG00000203943">
    <property type="expression patterns" value="Tissue enhanced (intestine, salivary gland)"/>
</dbReference>
<dbReference type="MIM" id="620800">
    <property type="type" value="gene"/>
</dbReference>
<dbReference type="neXtProt" id="NX_Q5VXD3"/>
<dbReference type="OpenTargets" id="ENSG00000203943"/>
<dbReference type="PharmGKB" id="PA142670952"/>
<dbReference type="VEuPathDB" id="HostDB:ENSG00000203943"/>
<dbReference type="eggNOG" id="ENOG502RZ5A">
    <property type="taxonomic scope" value="Eukaryota"/>
</dbReference>
<dbReference type="GeneTree" id="ENSGT00530000063936"/>
<dbReference type="HOGENOM" id="CLU_179421_0_0_1"/>
<dbReference type="InParanoid" id="Q5VXD3"/>
<dbReference type="OrthoDB" id="10004495at2759"/>
<dbReference type="PAN-GO" id="Q5VXD3">
    <property type="GO annotations" value="4 GO annotations based on evolutionary models"/>
</dbReference>
<dbReference type="PhylomeDB" id="Q5VXD3"/>
<dbReference type="PathwayCommons" id="Q5VXD3"/>
<dbReference type="SignaLink" id="Q5VXD3"/>
<dbReference type="BioGRID-ORCS" id="148418">
    <property type="hits" value="11 hits in 1143 CRISPR screens"/>
</dbReference>
<dbReference type="ChiTaRS" id="SAMD13">
    <property type="organism name" value="human"/>
</dbReference>
<dbReference type="GenomeRNAi" id="148418"/>
<dbReference type="Pharos" id="Q5VXD3">
    <property type="development level" value="Tdark"/>
</dbReference>
<dbReference type="PRO" id="PR:Q5VXD3"/>
<dbReference type="Proteomes" id="UP000005640">
    <property type="component" value="Chromosome 1"/>
</dbReference>
<dbReference type="RNAct" id="Q5VXD3">
    <property type="molecule type" value="protein"/>
</dbReference>
<dbReference type="Bgee" id="ENSG00000203943">
    <property type="expression patterns" value="Expressed in rectum and 97 other cell types or tissues"/>
</dbReference>
<dbReference type="ExpressionAtlas" id="Q5VXD3">
    <property type="expression patterns" value="baseline and differential"/>
</dbReference>
<dbReference type="CDD" id="cd09583">
    <property type="entry name" value="SAM_Atherin-like"/>
    <property type="match status" value="1"/>
</dbReference>
<dbReference type="Gene3D" id="1.10.150.50">
    <property type="entry name" value="Transcription Factor, Ets-1"/>
    <property type="match status" value="1"/>
</dbReference>
<dbReference type="InterPro" id="IPR050548">
    <property type="entry name" value="PcG_chromatin_remod_factors"/>
</dbReference>
<dbReference type="InterPro" id="IPR001660">
    <property type="entry name" value="SAM"/>
</dbReference>
<dbReference type="InterPro" id="IPR013761">
    <property type="entry name" value="SAM/pointed_sf"/>
</dbReference>
<dbReference type="PANTHER" id="PTHR12247:SF139">
    <property type="entry name" value="ATHERIN-RELATED"/>
    <property type="match status" value="1"/>
</dbReference>
<dbReference type="PANTHER" id="PTHR12247">
    <property type="entry name" value="POLYCOMB GROUP PROTEIN"/>
    <property type="match status" value="1"/>
</dbReference>
<dbReference type="Pfam" id="PF00536">
    <property type="entry name" value="SAM_1"/>
    <property type="match status" value="1"/>
</dbReference>
<dbReference type="SUPFAM" id="SSF47769">
    <property type="entry name" value="SAM/Pointed domain"/>
    <property type="match status" value="1"/>
</dbReference>
<dbReference type="PROSITE" id="PS50105">
    <property type="entry name" value="SAM_DOMAIN"/>
    <property type="match status" value="1"/>
</dbReference>
<name>SAM13_HUMAN</name>